<comment type="subcellular location">
    <subcellularLocation>
        <location evidence="3">Membrane</location>
        <topology evidence="3">Single-pass membrane protein</topology>
    </subcellularLocation>
</comment>
<comment type="tissue specificity">
    <text evidence="2">Specifically expressed in testis.</text>
</comment>
<comment type="similarity">
    <text evidence="3">Belongs to the CDC50/LEM3 family.</text>
</comment>
<comment type="caution">
    <text evidence="3">According to PubMed:17258408, the major transcript has no stop-codon and is probably non protein-coding. A minor transcript is also expressed and encodes the displayed protein which misses C-terminal part compared to other mammalian orthologs.</text>
</comment>
<organism>
    <name type="scientific">Homo sapiens</name>
    <name type="common">Human</name>
    <dbReference type="NCBI Taxonomy" id="9606"/>
    <lineage>
        <taxon>Eukaryota</taxon>
        <taxon>Metazoa</taxon>
        <taxon>Chordata</taxon>
        <taxon>Craniata</taxon>
        <taxon>Vertebrata</taxon>
        <taxon>Euteleostomi</taxon>
        <taxon>Mammalia</taxon>
        <taxon>Eutheria</taxon>
        <taxon>Euarchontoglires</taxon>
        <taxon>Primates</taxon>
        <taxon>Haplorrhini</taxon>
        <taxon>Catarrhini</taxon>
        <taxon>Hominidae</taxon>
        <taxon>Homo</taxon>
    </lineage>
</organism>
<keyword id="KW-0325">Glycoprotein</keyword>
<keyword id="KW-0472">Membrane</keyword>
<keyword id="KW-1185">Reference proteome</keyword>
<keyword id="KW-0812">Transmembrane</keyword>
<keyword id="KW-1133">Transmembrane helix</keyword>
<evidence type="ECO:0000255" key="1"/>
<evidence type="ECO:0000269" key="2">
    <source>
    </source>
</evidence>
<evidence type="ECO:0000305" key="3"/>
<evidence type="ECO:0000312" key="4">
    <source>
        <dbReference type="HGNC" id="HGNC:30443"/>
    </source>
</evidence>
<proteinExistence type="evidence at transcript level"/>
<feature type="chain" id="PRO_0000292845" description="Cell cycle control protein 50C">
    <location>
        <begin position="1"/>
        <end position="113"/>
    </location>
</feature>
<feature type="topological domain" description="Cytoplasmic" evidence="1">
    <location>
        <begin position="1"/>
        <end position="34"/>
    </location>
</feature>
<feature type="transmembrane region" description="Helical" evidence="1">
    <location>
        <begin position="35"/>
        <end position="55"/>
    </location>
</feature>
<feature type="topological domain" description="Extracellular" evidence="1">
    <location>
        <begin position="56"/>
        <end position="113"/>
    </location>
</feature>
<feature type="glycosylation site" description="N-linked (GlcNAc...) asparagine" evidence="1">
    <location>
        <position position="66"/>
    </location>
</feature>
<accession>A0ZSE6</accession>
<sequence>MEERAQHCLSRLLDNSALKQQELPIHRLYFTARRVLFVFFATGIFCLCMGIILILSARSTQEIEINYTRICANCAKLRENASNFDKECTCSIPFYLSGKMMVGEIQETRLTLH</sequence>
<name>CC50C_HUMAN</name>
<protein>
    <recommendedName>
        <fullName>Cell cycle control protein 50C</fullName>
    </recommendedName>
    <alternativeName>
        <fullName>Transmembrane protein 30C</fullName>
    </alternativeName>
</protein>
<gene>
    <name evidence="4" type="primary">TMEM30CP</name>
    <name type="synonym">CDC50C</name>
    <name type="synonym">TMEM30C</name>
</gene>
<reference key="1">
    <citation type="journal article" date="2006" name="Nature">
        <title>The DNA sequence, annotation and analysis of human chromosome 3.</title>
        <authorList>
            <person name="Muzny D.M."/>
            <person name="Scherer S.E."/>
            <person name="Kaul R."/>
            <person name="Wang J."/>
            <person name="Yu J."/>
            <person name="Sudbrak R."/>
            <person name="Buhay C.J."/>
            <person name="Chen R."/>
            <person name="Cree A."/>
            <person name="Ding Y."/>
            <person name="Dugan-Rocha S."/>
            <person name="Gill R."/>
            <person name="Gunaratne P."/>
            <person name="Harris R.A."/>
            <person name="Hawes A.C."/>
            <person name="Hernandez J."/>
            <person name="Hodgson A.V."/>
            <person name="Hume J."/>
            <person name="Jackson A."/>
            <person name="Khan Z.M."/>
            <person name="Kovar-Smith C."/>
            <person name="Lewis L.R."/>
            <person name="Lozado R.J."/>
            <person name="Metzker M.L."/>
            <person name="Milosavljevic A."/>
            <person name="Miner G.R."/>
            <person name="Morgan M.B."/>
            <person name="Nazareth L.V."/>
            <person name="Scott G."/>
            <person name="Sodergren E."/>
            <person name="Song X.-Z."/>
            <person name="Steffen D."/>
            <person name="Wei S."/>
            <person name="Wheeler D.A."/>
            <person name="Wright M.W."/>
            <person name="Worley K.C."/>
            <person name="Yuan Y."/>
            <person name="Zhang Z."/>
            <person name="Adams C.Q."/>
            <person name="Ansari-Lari M.A."/>
            <person name="Ayele M."/>
            <person name="Brown M.J."/>
            <person name="Chen G."/>
            <person name="Chen Z."/>
            <person name="Clendenning J."/>
            <person name="Clerc-Blankenburg K.P."/>
            <person name="Chen R."/>
            <person name="Chen Z."/>
            <person name="Davis C."/>
            <person name="Delgado O."/>
            <person name="Dinh H.H."/>
            <person name="Dong W."/>
            <person name="Draper H."/>
            <person name="Ernst S."/>
            <person name="Fu G."/>
            <person name="Gonzalez-Garay M.L."/>
            <person name="Garcia D.K."/>
            <person name="Gillett W."/>
            <person name="Gu J."/>
            <person name="Hao B."/>
            <person name="Haugen E."/>
            <person name="Havlak P."/>
            <person name="He X."/>
            <person name="Hennig S."/>
            <person name="Hu S."/>
            <person name="Huang W."/>
            <person name="Jackson L.R."/>
            <person name="Jacob L.S."/>
            <person name="Kelly S.H."/>
            <person name="Kube M."/>
            <person name="Levy R."/>
            <person name="Li Z."/>
            <person name="Liu B."/>
            <person name="Liu J."/>
            <person name="Liu W."/>
            <person name="Lu J."/>
            <person name="Maheshwari M."/>
            <person name="Nguyen B.-V."/>
            <person name="Okwuonu G.O."/>
            <person name="Palmeiri A."/>
            <person name="Pasternak S."/>
            <person name="Perez L.M."/>
            <person name="Phelps K.A."/>
            <person name="Plopper F.J."/>
            <person name="Qiang B."/>
            <person name="Raymond C."/>
            <person name="Rodriguez R."/>
            <person name="Saenphimmachak C."/>
            <person name="Santibanez J."/>
            <person name="Shen H."/>
            <person name="Shen Y."/>
            <person name="Subramanian S."/>
            <person name="Tabor P.E."/>
            <person name="Verduzco D."/>
            <person name="Waldron L."/>
            <person name="Wang J."/>
            <person name="Wang J."/>
            <person name="Wang Q."/>
            <person name="Williams G.A."/>
            <person name="Wong G.K.-S."/>
            <person name="Yao Z."/>
            <person name="Zhang J."/>
            <person name="Zhang X."/>
            <person name="Zhao G."/>
            <person name="Zhou J."/>
            <person name="Zhou Y."/>
            <person name="Nelson D."/>
            <person name="Lehrach H."/>
            <person name="Reinhardt R."/>
            <person name="Naylor S.L."/>
            <person name="Yang H."/>
            <person name="Olson M."/>
            <person name="Weinstock G."/>
            <person name="Gibbs R.A."/>
        </authorList>
    </citation>
    <scope>NUCLEOTIDE SEQUENCE [LARGE SCALE GENOMIC DNA]</scope>
</reference>
<reference key="2">
    <citation type="journal article" date="2007" name="Gene">
        <title>Aberrant termination of reproduction-related TMEM30C transcripts in the hominoids.</title>
        <authorList>
            <person name="Osada N."/>
            <person name="Hashimoto K."/>
            <person name="Hirai M."/>
            <person name="Kusuda J."/>
        </authorList>
    </citation>
    <scope>NUCLEOTIDE SEQUENCE [MRNA] OF 47-113</scope>
    <scope>TISSUE SPECIFICITY</scope>
    <source>
        <tissue>Testis</tissue>
    </source>
</reference>
<reference key="3">
    <citation type="journal article" date="2004" name="Oncol. Rep.">
        <title>Identification and characterization of CDC50A, CDC50B and CDC50C genes in silico.</title>
        <authorList>
            <person name="Katoh Y."/>
            <person name="Katoh M."/>
        </authorList>
    </citation>
    <scope>IDENTIFICATION</scope>
</reference>
<dbReference type="EMBL" id="AC129803">
    <property type="status" value="NOT_ANNOTATED_CDS"/>
    <property type="molecule type" value="Genomic_DNA"/>
</dbReference>
<dbReference type="EMBL" id="AB250297">
    <property type="protein sequence ID" value="BAF41210.1"/>
    <property type="molecule type" value="mRNA"/>
</dbReference>
<dbReference type="SMR" id="A0ZSE6"/>
<dbReference type="IntAct" id="A0ZSE6">
    <property type="interactions" value="1"/>
</dbReference>
<dbReference type="GlyCosmos" id="A0ZSE6">
    <property type="glycosylation" value="1 site, No reported glycans"/>
</dbReference>
<dbReference type="GlyGen" id="A0ZSE6">
    <property type="glycosylation" value="1 site"/>
</dbReference>
<dbReference type="BioMuta" id="HGNC:30443"/>
<dbReference type="PaxDb" id="9606-ENSP00000419663"/>
<dbReference type="AGR" id="HGNC:30443"/>
<dbReference type="GeneCards" id="TMEM30CP"/>
<dbReference type="HGNC" id="HGNC:30443">
    <property type="gene designation" value="TMEM30CP"/>
</dbReference>
<dbReference type="MIM" id="611030">
    <property type="type" value="gene"/>
</dbReference>
<dbReference type="neXtProt" id="NX_A0ZSE6"/>
<dbReference type="eggNOG" id="KOG2952">
    <property type="taxonomic scope" value="Eukaryota"/>
</dbReference>
<dbReference type="InParanoid" id="A0ZSE6"/>
<dbReference type="PAN-GO" id="A0ZSE6">
    <property type="GO annotations" value="4 GO annotations based on evolutionary models"/>
</dbReference>
<dbReference type="PhylomeDB" id="A0ZSE6"/>
<dbReference type="Pharos" id="A0ZSE6">
    <property type="development level" value="Tdark"/>
</dbReference>
<dbReference type="PRO" id="PR:A0ZSE6"/>
<dbReference type="Proteomes" id="UP000005640">
    <property type="component" value="Unplaced"/>
</dbReference>
<dbReference type="RNAct" id="A0ZSE6">
    <property type="molecule type" value="protein"/>
</dbReference>
<dbReference type="GO" id="GO:0016020">
    <property type="term" value="C:membrane"/>
    <property type="evidence" value="ECO:0007669"/>
    <property type="project" value="UniProtKB-SubCell"/>
</dbReference>
<dbReference type="InterPro" id="IPR005045">
    <property type="entry name" value="CDC50/LEM3_fam"/>
</dbReference>
<dbReference type="PANTHER" id="PTHR10926">
    <property type="entry name" value="CELL CYCLE CONTROL PROTEIN 50"/>
    <property type="match status" value="1"/>
</dbReference>
<dbReference type="PANTHER" id="PTHR10926:SF1">
    <property type="entry name" value="CELL CYCLE CONTROL PROTEIN 50C"/>
    <property type="match status" value="1"/>
</dbReference>